<gene>
    <name type="primary">pgaB</name>
    <name type="synonym">pecB</name>
    <name type="ORF">AFLA_105920</name>
</gene>
<evidence type="ECO:0000250" key="1"/>
<evidence type="ECO:0000255" key="2"/>
<evidence type="ECO:0000255" key="3">
    <source>
        <dbReference type="PROSITE-ProRule" id="PRU10052"/>
    </source>
</evidence>
<evidence type="ECO:0000305" key="4"/>
<keyword id="KW-0961">Cell wall biogenesis/degradation</keyword>
<keyword id="KW-1015">Disulfide bond</keyword>
<keyword id="KW-0325">Glycoprotein</keyword>
<keyword id="KW-0326">Glycosidase</keyword>
<keyword id="KW-0378">Hydrolase</keyword>
<keyword id="KW-0677">Repeat</keyword>
<keyword id="KW-0964">Secreted</keyword>
<keyword id="KW-0732">Signal</keyword>
<keyword id="KW-0865">Zymogen</keyword>
<feature type="signal peptide" evidence="2">
    <location>
        <begin position="1"/>
        <end position="20"/>
    </location>
</feature>
<feature type="propeptide" id="PRO_0000393646" evidence="2">
    <location>
        <begin position="21"/>
        <end position="28"/>
    </location>
</feature>
<feature type="chain" id="PRO_0000393647" description="Probable endopolygalacturonase B">
    <location>
        <begin position="29"/>
        <end position="363"/>
    </location>
</feature>
<feature type="repeat" description="PbH1 1">
    <location>
        <begin position="158"/>
        <end position="187"/>
    </location>
</feature>
<feature type="repeat" description="PbH1 2">
    <location>
        <begin position="188"/>
        <end position="209"/>
    </location>
</feature>
<feature type="repeat" description="PbH1 3">
    <location>
        <begin position="210"/>
        <end position="230"/>
    </location>
</feature>
<feature type="repeat" description="PbH1 4">
    <location>
        <begin position="239"/>
        <end position="260"/>
    </location>
</feature>
<feature type="repeat" description="PbH1 5">
    <location>
        <begin position="268"/>
        <end position="290"/>
    </location>
</feature>
<feature type="repeat" description="PbH1 6">
    <location>
        <begin position="302"/>
        <end position="347"/>
    </location>
</feature>
<feature type="active site" description="Proton donor" evidence="3">
    <location>
        <position position="202"/>
    </location>
</feature>
<feature type="active site" evidence="3">
    <location>
        <position position="224"/>
    </location>
</feature>
<feature type="glycosylation site" description="N-linked (GlcNAc...) asparagine" evidence="2">
    <location>
        <position position="162"/>
    </location>
</feature>
<feature type="disulfide bond" evidence="1">
    <location>
        <begin position="31"/>
        <end position="46"/>
    </location>
</feature>
<feature type="disulfide bond" evidence="1">
    <location>
        <begin position="204"/>
        <end position="220"/>
    </location>
</feature>
<feature type="disulfide bond" evidence="1">
    <location>
        <begin position="330"/>
        <end position="335"/>
    </location>
</feature>
<feature type="disulfide bond" evidence="1">
    <location>
        <begin position="354"/>
        <end position="363"/>
    </location>
</feature>
<organism>
    <name type="scientific">Aspergillus flavus (strain ATCC 200026 / FGSC A1120 / IAM 13836 / NRRL 3357 / JCM 12722 / SRRC 167)</name>
    <dbReference type="NCBI Taxonomy" id="332952"/>
    <lineage>
        <taxon>Eukaryota</taxon>
        <taxon>Fungi</taxon>
        <taxon>Dikarya</taxon>
        <taxon>Ascomycota</taxon>
        <taxon>Pezizomycotina</taxon>
        <taxon>Eurotiomycetes</taxon>
        <taxon>Eurotiomycetidae</taxon>
        <taxon>Eurotiales</taxon>
        <taxon>Aspergillaceae</taxon>
        <taxon>Aspergillus</taxon>
        <taxon>Aspergillus subgen. Circumdati</taxon>
    </lineage>
</organism>
<comment type="function">
    <text evidence="1">Involved in maceration and soft-rotting of plant tissue. Hydrolyzes the 1,4-alpha glycosidic bonds of de-esterified pectate in the smooth region of the plant cell wall (By similarity).</text>
</comment>
<comment type="catalytic activity">
    <reaction>
        <text>(1,4-alpha-D-galacturonosyl)n+m + H2O = (1,4-alpha-D-galacturonosyl)n + (1,4-alpha-D-galacturonosyl)m.</text>
        <dbReference type="EC" id="3.2.1.15"/>
    </reaction>
</comment>
<comment type="subcellular location">
    <subcellularLocation>
        <location evidence="1">Secreted</location>
    </subcellularLocation>
</comment>
<comment type="similarity">
    <text evidence="4">Belongs to the glycosyl hydrolase 28 family.</text>
</comment>
<proteinExistence type="inferred from homology"/>
<sequence>MQLLQSSVIAATVGAALVAAVPVELEARDSCTFTSAADAKSGKTSCSTITLSNIEVPAGETLDLTGLNDGTTVIFSGETTFGYKEWEGPLISVSGTNIKVQQASGAKIDGDGSRWWDGKGGNGGKTKPKFFYAHKLDSSSITGLQIYNTPVQGFSIQSDNLNITDVTIDNSAGTAEGHNTDAFDVGSSTYINIDGATVYNQDDCLAINSGSHITFTNGYCDGGHGLSIGSVGGRSDNTVEDVTISNSKVVNSQNGVRIKTVYDATGTVSNVKFEDITLSGITKYGLIVEQDYENGSPTGTPTNGIKVSDITFDKVTGTVESDATDIYILCGSGSCTDWTWSGVSITGGKTSSKCENVPTGASC</sequence>
<accession>B8N7Z8</accession>
<dbReference type="EC" id="3.2.1.15"/>
<dbReference type="EMBL" id="EQ963475">
    <property type="protein sequence ID" value="EED53217.1"/>
    <property type="molecule type" value="Genomic_DNA"/>
</dbReference>
<dbReference type="RefSeq" id="XP_002376463.1">
    <property type="nucleotide sequence ID" value="XM_002376422.1"/>
</dbReference>
<dbReference type="SMR" id="B8N7Z8"/>
<dbReference type="STRING" id="332952.B8N7Z8"/>
<dbReference type="GlyCosmos" id="B8N7Z8">
    <property type="glycosylation" value="1 site, No reported glycans"/>
</dbReference>
<dbReference type="EnsemblFungi" id="EED53217">
    <property type="protein sequence ID" value="EED53217"/>
    <property type="gene ID" value="AFLA_105920"/>
</dbReference>
<dbReference type="VEuPathDB" id="FungiDB:AFLA_006526"/>
<dbReference type="eggNOG" id="ENOG502QTAW">
    <property type="taxonomic scope" value="Eukaryota"/>
</dbReference>
<dbReference type="HOGENOM" id="CLU_040116_0_0_1"/>
<dbReference type="OMA" id="WTGNSIT"/>
<dbReference type="GO" id="GO:0005576">
    <property type="term" value="C:extracellular region"/>
    <property type="evidence" value="ECO:0000250"/>
    <property type="project" value="UniProtKB"/>
</dbReference>
<dbReference type="GO" id="GO:0004650">
    <property type="term" value="F:polygalacturonase activity"/>
    <property type="evidence" value="ECO:0000250"/>
    <property type="project" value="UniProtKB"/>
</dbReference>
<dbReference type="GO" id="GO:0071555">
    <property type="term" value="P:cell wall organization"/>
    <property type="evidence" value="ECO:0007669"/>
    <property type="project" value="UniProtKB-KW"/>
</dbReference>
<dbReference type="GO" id="GO:0045490">
    <property type="term" value="P:pectin catabolic process"/>
    <property type="evidence" value="ECO:0000250"/>
    <property type="project" value="UniProtKB"/>
</dbReference>
<dbReference type="FunFam" id="2.160.20.10:FF:000002">
    <property type="entry name" value="Endopolygalacturonase D"/>
    <property type="match status" value="1"/>
</dbReference>
<dbReference type="Gene3D" id="2.160.20.10">
    <property type="entry name" value="Single-stranded right-handed beta-helix, Pectin lyase-like"/>
    <property type="match status" value="1"/>
</dbReference>
<dbReference type="InterPro" id="IPR000743">
    <property type="entry name" value="Glyco_hydro_28"/>
</dbReference>
<dbReference type="InterPro" id="IPR050434">
    <property type="entry name" value="Glycosyl_hydrlase_28"/>
</dbReference>
<dbReference type="InterPro" id="IPR006626">
    <property type="entry name" value="PbH1"/>
</dbReference>
<dbReference type="InterPro" id="IPR012334">
    <property type="entry name" value="Pectin_lyas_fold"/>
</dbReference>
<dbReference type="InterPro" id="IPR011050">
    <property type="entry name" value="Pectin_lyase_fold/virulence"/>
</dbReference>
<dbReference type="PANTHER" id="PTHR31884:SF13">
    <property type="entry name" value="ENDOPOLYGALACTURONASE B"/>
    <property type="match status" value="1"/>
</dbReference>
<dbReference type="PANTHER" id="PTHR31884">
    <property type="entry name" value="POLYGALACTURONASE"/>
    <property type="match status" value="1"/>
</dbReference>
<dbReference type="Pfam" id="PF00295">
    <property type="entry name" value="Glyco_hydro_28"/>
    <property type="match status" value="1"/>
</dbReference>
<dbReference type="SMART" id="SM00710">
    <property type="entry name" value="PbH1"/>
    <property type="match status" value="6"/>
</dbReference>
<dbReference type="SUPFAM" id="SSF51126">
    <property type="entry name" value="Pectin lyase-like"/>
    <property type="match status" value="1"/>
</dbReference>
<dbReference type="PROSITE" id="PS00502">
    <property type="entry name" value="POLYGALACTURONASE"/>
    <property type="match status" value="1"/>
</dbReference>
<name>PGLRB_ASPFN</name>
<reference key="1">
    <citation type="journal article" date="2015" name="Genome Announc.">
        <title>Genome sequence of Aspergillus flavus NRRL 3357, a strain that causes aflatoxin contamination of food and feed.</title>
        <authorList>
            <person name="Nierman W.C."/>
            <person name="Yu J."/>
            <person name="Fedorova-Abrams N.D."/>
            <person name="Losada L."/>
            <person name="Cleveland T.E."/>
            <person name="Bhatnagar D."/>
            <person name="Bennett J.W."/>
            <person name="Dean R."/>
            <person name="Payne G.A."/>
        </authorList>
    </citation>
    <scope>NUCLEOTIDE SEQUENCE [LARGE SCALE GENOMIC DNA]</scope>
    <source>
        <strain>ATCC 200026 / FGSC A1120 / IAM 13836 / NRRL 3357 / JCM 12722 / SRRC 167</strain>
    </source>
</reference>
<protein>
    <recommendedName>
        <fullName>Probable endopolygalacturonase B</fullName>
        <ecNumber>3.2.1.15</ecNumber>
    </recommendedName>
    <alternativeName>
        <fullName>Pectinase B</fullName>
    </alternativeName>
    <alternativeName>
        <fullName>Polygalacturonase B</fullName>
    </alternativeName>
</protein>